<name>OSTC_CHICK</name>
<sequence length="149" mass="16743">METLFRLPFAVLECPNIKLKRPGWVHMPSAMTVYALVVVSYFLITGGIIYDVIVEPPSVGSMTDEHGHQRPVAFLAYRVNGQYIMEGLASSFLFTMGGLGFIILDRSNAPNIPKLNRFLLLFIGFVSVLLSFFMARVFMRMKLPGYLMG</sequence>
<organism>
    <name type="scientific">Gallus gallus</name>
    <name type="common">Chicken</name>
    <dbReference type="NCBI Taxonomy" id="9031"/>
    <lineage>
        <taxon>Eukaryota</taxon>
        <taxon>Metazoa</taxon>
        <taxon>Chordata</taxon>
        <taxon>Craniata</taxon>
        <taxon>Vertebrata</taxon>
        <taxon>Euteleostomi</taxon>
        <taxon>Archelosauria</taxon>
        <taxon>Archosauria</taxon>
        <taxon>Dinosauria</taxon>
        <taxon>Saurischia</taxon>
        <taxon>Theropoda</taxon>
        <taxon>Coelurosauria</taxon>
        <taxon>Aves</taxon>
        <taxon>Neognathae</taxon>
        <taxon>Galloanserae</taxon>
        <taxon>Galliformes</taxon>
        <taxon>Phasianidae</taxon>
        <taxon>Phasianinae</taxon>
        <taxon>Gallus</taxon>
    </lineage>
</organism>
<keyword id="KW-0472">Membrane</keyword>
<keyword id="KW-1185">Reference proteome</keyword>
<keyword id="KW-0812">Transmembrane</keyword>
<keyword id="KW-1133">Transmembrane helix</keyword>
<protein>
    <recommendedName>
        <fullName evidence="2">Oligosaccharyltransferase complex subunit OSTC</fullName>
    </recommendedName>
</protein>
<feature type="chain" id="PRO_0000320604" description="Oligosaccharyltransferase complex subunit OSTC">
    <location>
        <begin position="1"/>
        <end position="149"/>
    </location>
</feature>
<feature type="topological domain" description="Cytoplasmic" evidence="3">
    <location>
        <begin position="1"/>
        <end position="32"/>
    </location>
</feature>
<feature type="transmembrane region" description="Helical" evidence="3">
    <location>
        <begin position="33"/>
        <end position="53"/>
    </location>
</feature>
<feature type="topological domain" description="Extracellular" evidence="3">
    <location>
        <begin position="54"/>
        <end position="83"/>
    </location>
</feature>
<feature type="transmembrane region" description="Helical" evidence="3">
    <location>
        <begin position="84"/>
        <end position="104"/>
    </location>
</feature>
<feature type="topological domain" description="Cytoplasmic" evidence="3">
    <location>
        <begin position="105"/>
        <end position="117"/>
    </location>
</feature>
<feature type="transmembrane region" description="Helical" evidence="3">
    <location>
        <begin position="118"/>
        <end position="138"/>
    </location>
</feature>
<feature type="topological domain" description="Extracellular" evidence="3">
    <location>
        <begin position="139"/>
        <end position="149"/>
    </location>
</feature>
<gene>
    <name evidence="2" type="primary">OSTC</name>
    <name type="ORF">RCJMB04_16e19</name>
</gene>
<reference key="1">
    <citation type="journal article" date="2005" name="Genome Biol.">
        <title>Full-length cDNAs from chicken bursal lymphocytes to facilitate gene function analysis.</title>
        <authorList>
            <person name="Caldwell R.B."/>
            <person name="Kierzek A.M."/>
            <person name="Arakawa H."/>
            <person name="Bezzubov Y."/>
            <person name="Zaim J."/>
            <person name="Fiedler P."/>
            <person name="Kutter S."/>
            <person name="Blagodatski A."/>
            <person name="Kostovska D."/>
            <person name="Koter M."/>
            <person name="Plachy J."/>
            <person name="Carninci P."/>
            <person name="Hayashizaki Y."/>
            <person name="Buerstedde J.-M."/>
        </authorList>
    </citation>
    <scope>NUCLEOTIDE SEQUENCE [LARGE SCALE MRNA]</scope>
    <source>
        <strain>CB</strain>
        <tissue>Bursa of Fabricius</tissue>
    </source>
</reference>
<accession>Q5ZJR3</accession>
<comment type="function">
    <text evidence="2">Specific component of the STT3A-containing form of the oligosaccharyl transferase (OST) complex that catalyzes the initial transfer of a defined glycan (Glc(3)Man(9)GlcNAc(2) in eukaryotes) from the lipid carrier dolichol-pyrophosphate to an asparagine residue within an Asn-X-Ser/Thr consensus motif in nascent polypeptide chains, the first step in protein N-glycosylation. N-glycosylation occurs cotranslationally and the complex associates with the Sec61 complex at the channel-forming translocon complex that mediates protein translocation across the endoplasmic reticulum (ER). All subunits are required for a maximal enzyme activity.</text>
</comment>
<comment type="pathway">
    <text evidence="2">Protein modification; protein glycosylation.</text>
</comment>
<comment type="subunit">
    <text evidence="1">Specific component of the STT3A-containing form of the oligosaccharyltransferase (OST) complex.</text>
</comment>
<comment type="subcellular location">
    <subcellularLocation>
        <location evidence="4">Membrane</location>
        <topology evidence="4">Multi-pass membrane protein</topology>
    </subcellularLocation>
</comment>
<comment type="similarity">
    <text evidence="4">Belongs to the OSTC family.</text>
</comment>
<evidence type="ECO:0000250" key="1">
    <source>
        <dbReference type="UniProtKB" id="P86218"/>
    </source>
</evidence>
<evidence type="ECO:0000250" key="2">
    <source>
        <dbReference type="UniProtKB" id="Q9NRP0"/>
    </source>
</evidence>
<evidence type="ECO:0000255" key="3"/>
<evidence type="ECO:0000305" key="4"/>
<proteinExistence type="evidence at transcript level"/>
<dbReference type="EMBL" id="AJ720371">
    <property type="protein sequence ID" value="CAG32030.1"/>
    <property type="molecule type" value="mRNA"/>
</dbReference>
<dbReference type="RefSeq" id="NP_001006442.1">
    <property type="nucleotide sequence ID" value="NM_001006442.2"/>
</dbReference>
<dbReference type="SMR" id="Q5ZJR3"/>
<dbReference type="FunCoup" id="Q5ZJR3">
    <property type="interactions" value="1066"/>
</dbReference>
<dbReference type="STRING" id="9031.ENSGALP00000017119"/>
<dbReference type="PaxDb" id="9031-ENSGALP00000017119"/>
<dbReference type="GeneID" id="422525"/>
<dbReference type="KEGG" id="gga:422525"/>
<dbReference type="CTD" id="58505"/>
<dbReference type="VEuPathDB" id="HostDB:geneid_422525"/>
<dbReference type="eggNOG" id="KOG3356">
    <property type="taxonomic scope" value="Eukaryota"/>
</dbReference>
<dbReference type="HOGENOM" id="CLU_109136_1_0_1"/>
<dbReference type="InParanoid" id="Q5ZJR3"/>
<dbReference type="OMA" id="CWIFMRM"/>
<dbReference type="OrthoDB" id="10256333at2759"/>
<dbReference type="PhylomeDB" id="Q5ZJR3"/>
<dbReference type="UniPathway" id="UPA00378"/>
<dbReference type="PRO" id="PR:Q5ZJR3"/>
<dbReference type="Proteomes" id="UP000000539">
    <property type="component" value="Chromosome 4"/>
</dbReference>
<dbReference type="Bgee" id="ENSGALG00000010526">
    <property type="expression patterns" value="Expressed in spermatocyte and 14 other cell types or tissues"/>
</dbReference>
<dbReference type="GO" id="GO:0008250">
    <property type="term" value="C:oligosaccharyltransferase complex"/>
    <property type="evidence" value="ECO:0000318"/>
    <property type="project" value="GO_Central"/>
</dbReference>
<dbReference type="GO" id="GO:0006486">
    <property type="term" value="P:protein glycosylation"/>
    <property type="evidence" value="ECO:0007669"/>
    <property type="project" value="UniProtKB-UniPathway"/>
</dbReference>
<dbReference type="InterPro" id="IPR021149">
    <property type="entry name" value="OligosaccharylTrfase_OST3/OST6"/>
</dbReference>
<dbReference type="InterPro" id="IPR042416">
    <property type="entry name" value="OSTC"/>
</dbReference>
<dbReference type="PANTHER" id="PTHR13160">
    <property type="entry name" value="OLIGOSACCHARYLTRANSFERASE COMPLEX SUBUNIT OSTC"/>
    <property type="match status" value="1"/>
</dbReference>
<dbReference type="PANTHER" id="PTHR13160:SF4">
    <property type="entry name" value="OLIGOSACCHARYLTRANSFERASE COMPLEX SUBUNIT OSTC"/>
    <property type="match status" value="1"/>
</dbReference>
<dbReference type="Pfam" id="PF04756">
    <property type="entry name" value="OST3_OST6"/>
    <property type="match status" value="1"/>
</dbReference>